<reference key="1">
    <citation type="journal article" date="2008" name="BMC Genomics">
        <title>The genome of Aeromonas salmonicida subsp. salmonicida A449: insights into the evolution of a fish pathogen.</title>
        <authorList>
            <person name="Reith M.E."/>
            <person name="Singh R.K."/>
            <person name="Curtis B."/>
            <person name="Boyd J.M."/>
            <person name="Bouevitch A."/>
            <person name="Kimball J."/>
            <person name="Munholland J."/>
            <person name="Murphy C."/>
            <person name="Sarty D."/>
            <person name="Williams J."/>
            <person name="Nash J.H."/>
            <person name="Johnson S.C."/>
            <person name="Brown L.L."/>
        </authorList>
    </citation>
    <scope>NUCLEOTIDE SEQUENCE [LARGE SCALE GENOMIC DNA]</scope>
    <source>
        <strain>A449</strain>
    </source>
</reference>
<accession>A4SNL6</accession>
<evidence type="ECO:0000255" key="1">
    <source>
        <dbReference type="HAMAP-Rule" id="MF_00075"/>
    </source>
</evidence>
<dbReference type="EMBL" id="CP000644">
    <property type="protein sequence ID" value="ABO90488.1"/>
    <property type="molecule type" value="Genomic_DNA"/>
</dbReference>
<dbReference type="RefSeq" id="WP_005300033.1">
    <property type="nucleotide sequence ID" value="NC_009348.1"/>
</dbReference>
<dbReference type="SMR" id="A4SNL6"/>
<dbReference type="STRING" id="29491.GCA_000820065_01481"/>
<dbReference type="GeneID" id="97856495"/>
<dbReference type="KEGG" id="asa:ASA_2445"/>
<dbReference type="eggNOG" id="COG0361">
    <property type="taxonomic scope" value="Bacteria"/>
</dbReference>
<dbReference type="HOGENOM" id="CLU_151267_1_0_6"/>
<dbReference type="Proteomes" id="UP000000225">
    <property type="component" value="Chromosome"/>
</dbReference>
<dbReference type="GO" id="GO:0005829">
    <property type="term" value="C:cytosol"/>
    <property type="evidence" value="ECO:0007669"/>
    <property type="project" value="TreeGrafter"/>
</dbReference>
<dbReference type="GO" id="GO:0043022">
    <property type="term" value="F:ribosome binding"/>
    <property type="evidence" value="ECO:0007669"/>
    <property type="project" value="UniProtKB-UniRule"/>
</dbReference>
<dbReference type="GO" id="GO:0019843">
    <property type="term" value="F:rRNA binding"/>
    <property type="evidence" value="ECO:0007669"/>
    <property type="project" value="UniProtKB-UniRule"/>
</dbReference>
<dbReference type="GO" id="GO:0003743">
    <property type="term" value="F:translation initiation factor activity"/>
    <property type="evidence" value="ECO:0007669"/>
    <property type="project" value="UniProtKB-UniRule"/>
</dbReference>
<dbReference type="CDD" id="cd04451">
    <property type="entry name" value="S1_IF1"/>
    <property type="match status" value="1"/>
</dbReference>
<dbReference type="FunFam" id="2.40.50.140:FF:000002">
    <property type="entry name" value="Translation initiation factor IF-1"/>
    <property type="match status" value="1"/>
</dbReference>
<dbReference type="Gene3D" id="2.40.50.140">
    <property type="entry name" value="Nucleic acid-binding proteins"/>
    <property type="match status" value="1"/>
</dbReference>
<dbReference type="HAMAP" id="MF_00075">
    <property type="entry name" value="IF_1"/>
    <property type="match status" value="1"/>
</dbReference>
<dbReference type="InterPro" id="IPR012340">
    <property type="entry name" value="NA-bd_OB-fold"/>
</dbReference>
<dbReference type="InterPro" id="IPR006196">
    <property type="entry name" value="RNA-binding_domain_S1_IF1"/>
</dbReference>
<dbReference type="InterPro" id="IPR003029">
    <property type="entry name" value="S1_domain"/>
</dbReference>
<dbReference type="InterPro" id="IPR004368">
    <property type="entry name" value="TIF_IF1"/>
</dbReference>
<dbReference type="NCBIfam" id="TIGR00008">
    <property type="entry name" value="infA"/>
    <property type="match status" value="1"/>
</dbReference>
<dbReference type="PANTHER" id="PTHR33370">
    <property type="entry name" value="TRANSLATION INITIATION FACTOR IF-1, CHLOROPLASTIC"/>
    <property type="match status" value="1"/>
</dbReference>
<dbReference type="PANTHER" id="PTHR33370:SF1">
    <property type="entry name" value="TRANSLATION INITIATION FACTOR IF-1, CHLOROPLASTIC"/>
    <property type="match status" value="1"/>
</dbReference>
<dbReference type="Pfam" id="PF01176">
    <property type="entry name" value="eIF-1a"/>
    <property type="match status" value="1"/>
</dbReference>
<dbReference type="SMART" id="SM00316">
    <property type="entry name" value="S1"/>
    <property type="match status" value="1"/>
</dbReference>
<dbReference type="SUPFAM" id="SSF50249">
    <property type="entry name" value="Nucleic acid-binding proteins"/>
    <property type="match status" value="1"/>
</dbReference>
<dbReference type="PROSITE" id="PS50832">
    <property type="entry name" value="S1_IF1_TYPE"/>
    <property type="match status" value="1"/>
</dbReference>
<organism>
    <name type="scientific">Aeromonas salmonicida (strain A449)</name>
    <dbReference type="NCBI Taxonomy" id="382245"/>
    <lineage>
        <taxon>Bacteria</taxon>
        <taxon>Pseudomonadati</taxon>
        <taxon>Pseudomonadota</taxon>
        <taxon>Gammaproteobacteria</taxon>
        <taxon>Aeromonadales</taxon>
        <taxon>Aeromonadaceae</taxon>
        <taxon>Aeromonas</taxon>
    </lineage>
</organism>
<feature type="chain" id="PRO_0000338755" description="Translation initiation factor IF-1">
    <location>
        <begin position="1"/>
        <end position="72"/>
    </location>
</feature>
<feature type="domain" description="S1-like" evidence="1">
    <location>
        <begin position="1"/>
        <end position="72"/>
    </location>
</feature>
<gene>
    <name evidence="1" type="primary">infA</name>
    <name type="ordered locus">ASA_2445</name>
</gene>
<comment type="function">
    <text evidence="1">One of the essential components for the initiation of protein synthesis. Stabilizes the binding of IF-2 and IF-3 on the 30S subunit to which N-formylmethionyl-tRNA(fMet) subsequently binds. Helps modulate mRNA selection, yielding the 30S pre-initiation complex (PIC). Upon addition of the 50S ribosomal subunit IF-1, IF-2 and IF-3 are released leaving the mature 70S translation initiation complex.</text>
</comment>
<comment type="subunit">
    <text evidence="1">Component of the 30S ribosomal translation pre-initiation complex which assembles on the 30S ribosome in the order IF-2 and IF-3, IF-1 and N-formylmethionyl-tRNA(fMet); mRNA recruitment can occur at any time during PIC assembly.</text>
</comment>
<comment type="subcellular location">
    <subcellularLocation>
        <location evidence="1">Cytoplasm</location>
    </subcellularLocation>
</comment>
<comment type="similarity">
    <text evidence="1">Belongs to the IF-1 family.</text>
</comment>
<keyword id="KW-0963">Cytoplasm</keyword>
<keyword id="KW-0396">Initiation factor</keyword>
<keyword id="KW-0648">Protein biosynthesis</keyword>
<keyword id="KW-0694">RNA-binding</keyword>
<keyword id="KW-0699">rRNA-binding</keyword>
<name>IF1_AERS4</name>
<proteinExistence type="inferred from homology"/>
<sequence>MAKEDSIEMQGTILETLPNTMFRVELENGHVVIAHISGKMRKNYIRILTGDKVTVALTPYDLSKGRIVFRSR</sequence>
<protein>
    <recommendedName>
        <fullName evidence="1">Translation initiation factor IF-1</fullName>
    </recommendedName>
</protein>